<evidence type="ECO:0000250" key="1">
    <source>
        <dbReference type="UniProtKB" id="Q03148"/>
    </source>
</evidence>
<evidence type="ECO:0000269" key="2">
    <source>
    </source>
</evidence>
<evidence type="ECO:0000303" key="3">
    <source>
    </source>
</evidence>
<evidence type="ECO:0000305" key="4"/>
<proteinExistence type="evidence at protein level"/>
<protein>
    <recommendedName>
        <fullName>Pyridoxal 5'-phosphate synthase subunit Pdx1</fullName>
        <shortName>PLP synthase subunit Pdx1</shortName>
        <ecNumber evidence="2">4.3.3.6</ecNumber>
    </recommendedName>
</protein>
<organism>
    <name type="scientific">Plasmodium berghei</name>
    <dbReference type="NCBI Taxonomy" id="5821"/>
    <lineage>
        <taxon>Eukaryota</taxon>
        <taxon>Sar</taxon>
        <taxon>Alveolata</taxon>
        <taxon>Apicomplexa</taxon>
        <taxon>Aconoidasida</taxon>
        <taxon>Haemosporida</taxon>
        <taxon>Plasmodiidae</taxon>
        <taxon>Plasmodium</taxon>
        <taxon>Plasmodium (Vinckeia)</taxon>
    </lineage>
</organism>
<name>PDX1_PLABE</name>
<comment type="function">
    <text evidence="2">Catalyzes the formation of pyridoxal 5'-phosphate from ribose 5-phosphate (RBP), glyceraldehyde 3-phosphate (G3P) and ammonia. The ammonia is provided by Pdx2. Can also use ribulose 5-phosphate and dihydroxyacetone phosphate as substrates, resulting from enzyme-catalyzed isomerization of RBP and G3P, respectively.</text>
</comment>
<comment type="catalytic activity">
    <reaction evidence="2">
        <text>aldehydo-D-ribose 5-phosphate + D-glyceraldehyde 3-phosphate + L-glutamine = pyridoxal 5'-phosphate + L-glutamate + phosphate + 3 H2O + H(+)</text>
        <dbReference type="Rhea" id="RHEA:31507"/>
        <dbReference type="ChEBI" id="CHEBI:15377"/>
        <dbReference type="ChEBI" id="CHEBI:15378"/>
        <dbReference type="ChEBI" id="CHEBI:29985"/>
        <dbReference type="ChEBI" id="CHEBI:43474"/>
        <dbReference type="ChEBI" id="CHEBI:58273"/>
        <dbReference type="ChEBI" id="CHEBI:58359"/>
        <dbReference type="ChEBI" id="CHEBI:59776"/>
        <dbReference type="ChEBI" id="CHEBI:597326"/>
        <dbReference type="EC" id="4.3.3.6"/>
    </reaction>
</comment>
<comment type="pathway">
    <text>Cofactor biosynthesis; pyridoxal 5'-phosphate biosynthesis.</text>
</comment>
<comment type="subunit">
    <text evidence="2">Homohexamer and homododecamer. In the presence of Pdx2, forms a dodecamer of heterodimers.</text>
</comment>
<comment type="similarity">
    <text evidence="4">Belongs to the PdxS/SNZ family.</text>
</comment>
<feature type="chain" id="PRO_0000431837" description="Pyridoxal 5'-phosphate synthase subunit Pdx1">
    <location>
        <begin position="1"/>
        <end position="297"/>
    </location>
</feature>
<feature type="active site" description="Schiff-base intermediate with D-ribose 5-phosphate" evidence="2">
    <location>
        <position position="84"/>
    </location>
</feature>
<feature type="binding site" evidence="2">
    <location>
        <position position="27"/>
    </location>
    <ligand>
        <name>D-ribose 5-phosphate</name>
        <dbReference type="ChEBI" id="CHEBI:78346"/>
    </ligand>
</feature>
<feature type="binding site" evidence="2">
    <location>
        <position position="156"/>
    </location>
    <ligand>
        <name>D-ribose 5-phosphate</name>
        <dbReference type="ChEBI" id="CHEBI:78346"/>
    </ligand>
</feature>
<feature type="binding site" evidence="1">
    <location>
        <position position="168"/>
    </location>
    <ligand>
        <name>D-glyceraldehyde 3-phosphate</name>
        <dbReference type="ChEBI" id="CHEBI:59776"/>
    </ligand>
</feature>
<feature type="binding site" evidence="2">
    <location>
        <position position="217"/>
    </location>
    <ligand>
        <name>D-ribose 5-phosphate</name>
        <dbReference type="ChEBI" id="CHEBI:78346"/>
    </ligand>
</feature>
<feature type="binding site" evidence="2">
    <location>
        <begin position="238"/>
        <end position="239"/>
    </location>
    <ligand>
        <name>D-ribose 5-phosphate</name>
        <dbReference type="ChEBI" id="CHEBI:78346"/>
    </ligand>
</feature>
<feature type="mutagenesis site" description="2-fold reduction in glutaminase activity. No effect on overall pyridoxal 5'-phosphate synthase activity." evidence="2">
    <original>M</original>
    <variation>V</variation>
    <location>
        <position position="19"/>
    </location>
</feature>
<feature type="mutagenesis site" description="2-fold increase in glutaminase and in overall pyridoxal 5'-phosphate synthase activity." evidence="2">
    <original>M</original>
    <variation>I</variation>
    <location>
        <position position="46"/>
    </location>
</feature>
<feature type="mutagenesis site" description="No effect on glutaminase activity. 4-fold reduction in overall pyridoxal 5'-phosphate synthase activity." evidence="2">
    <original>L</original>
    <variation>A</variation>
    <location>
        <position position="82"/>
    </location>
</feature>
<feature type="mutagenesis site" description="No effect on glutaminase activity. 5-fold reduction in overall pyridoxal 5'-phosphate synthase activity." evidence="2">
    <original>M</original>
    <variation>A</variation>
    <location>
        <position position="103"/>
    </location>
</feature>
<feature type="mutagenesis site" description="No effect on glutaminase activity. Total loss of overall pyridoxal 5'-phosphate synthase activity." evidence="2">
    <original>M</original>
    <variation>F</variation>
    <location>
        <position position="103"/>
    </location>
</feature>
<feature type="mutagenesis site" description="No effect on glutaminase activity. Changes the affinity of the complex for ammonia." evidence="2">
    <original>M</original>
    <variation>L</variation>
    <location>
        <position position="148"/>
    </location>
</feature>
<gene>
    <name evidence="3" type="primary">pdx1</name>
</gene>
<keyword id="KW-0002">3D-structure</keyword>
<keyword id="KW-0456">Lyase</keyword>
<keyword id="KW-0663">Pyridoxal phosphate</keyword>
<keyword id="KW-0704">Schiff base</keyword>
<sequence length="297" mass="32689">MRDYADNDSILLKHGWCEMLKGGVIMDVKNVEQAKIAEKAGAIGVMILENIPSELRNTDGVARSVDPLKIEEIRKCISINVLAKVRIGHFVEAQILEELKVDMLDESEVLTMADEYNHINKHKFKTPFVCGCTNLGEALRRISEGASMIRTKGEAGTGNIIEAIKHIRTVNNEIKYLCSLDESEVYNFAKKLRAPIDLILLTRKLKRLPVVNFAAGGIATPADAAMCMQLGMDGVFVGSGIFESENPQKMASSIVMAVSNFNNPKILLNVSLGLGKAMHGNTKVSNKWKNKSEEDNS</sequence>
<accession>P0DMS0</accession>
<dbReference type="EC" id="4.3.3.6" evidence="2"/>
<dbReference type="PDB" id="4ADS">
    <property type="method" value="X-ray"/>
    <property type="resolution" value="3.61 A"/>
    <property type="chains" value="A/B/C/D/E/F=3-282"/>
</dbReference>
<dbReference type="PDB" id="4ADT">
    <property type="method" value="X-ray"/>
    <property type="resolution" value="2.42 A"/>
    <property type="chains" value="A/B=1-297"/>
</dbReference>
<dbReference type="PDB" id="4ADU">
    <property type="method" value="X-ray"/>
    <property type="resolution" value="2.44 A"/>
    <property type="chains" value="A/B=1-297"/>
</dbReference>
<dbReference type="PDBsum" id="4ADS"/>
<dbReference type="PDBsum" id="4ADT"/>
<dbReference type="PDBsum" id="4ADU"/>
<dbReference type="SMR" id="P0DMS0"/>
<dbReference type="VEuPathDB" id="PlasmoDB:PBANKA_1120200"/>
<dbReference type="OMA" id="RYANRGW"/>
<dbReference type="OrthoDB" id="1660966at2759"/>
<dbReference type="UniPathway" id="UPA00245"/>
<dbReference type="GO" id="GO:0036381">
    <property type="term" value="F:pyridoxal 5'-phosphate synthase (glutamine hydrolysing) activity"/>
    <property type="evidence" value="ECO:0007669"/>
    <property type="project" value="UniProtKB-EC"/>
</dbReference>
<dbReference type="GO" id="GO:0006520">
    <property type="term" value="P:amino acid metabolic process"/>
    <property type="evidence" value="ECO:0007669"/>
    <property type="project" value="TreeGrafter"/>
</dbReference>
<dbReference type="GO" id="GO:0042823">
    <property type="term" value="P:pyridoxal phosphate biosynthetic process"/>
    <property type="evidence" value="ECO:0007669"/>
    <property type="project" value="UniProtKB-UniPathway"/>
</dbReference>
<dbReference type="GO" id="GO:0008615">
    <property type="term" value="P:pyridoxine biosynthetic process"/>
    <property type="evidence" value="ECO:0007669"/>
    <property type="project" value="TreeGrafter"/>
</dbReference>
<dbReference type="CDD" id="cd04727">
    <property type="entry name" value="pdxS"/>
    <property type="match status" value="1"/>
</dbReference>
<dbReference type="FunFam" id="3.20.20.70:FF:000001">
    <property type="entry name" value="Pyridoxine biosynthesis protein PDX1"/>
    <property type="match status" value="1"/>
</dbReference>
<dbReference type="Gene3D" id="3.20.20.70">
    <property type="entry name" value="Aldolase class I"/>
    <property type="match status" value="1"/>
</dbReference>
<dbReference type="InterPro" id="IPR013785">
    <property type="entry name" value="Aldolase_TIM"/>
</dbReference>
<dbReference type="InterPro" id="IPR001852">
    <property type="entry name" value="PdxS/SNZ"/>
</dbReference>
<dbReference type="InterPro" id="IPR033755">
    <property type="entry name" value="PdxS/SNZ_N"/>
</dbReference>
<dbReference type="InterPro" id="IPR011060">
    <property type="entry name" value="RibuloseP-bd_barrel"/>
</dbReference>
<dbReference type="NCBIfam" id="NF003215">
    <property type="entry name" value="PRK04180.1"/>
    <property type="match status" value="1"/>
</dbReference>
<dbReference type="PANTHER" id="PTHR31829">
    <property type="entry name" value="PYRIDOXAL 5'-PHOSPHATE SYNTHASE SUBUNIT SNZ1-RELATED"/>
    <property type="match status" value="1"/>
</dbReference>
<dbReference type="PANTHER" id="PTHR31829:SF0">
    <property type="entry name" value="PYRIDOXAL 5'-PHOSPHATE SYNTHASE SUBUNIT SNZ1-RELATED"/>
    <property type="match status" value="1"/>
</dbReference>
<dbReference type="Pfam" id="PF01680">
    <property type="entry name" value="SOR_SNZ"/>
    <property type="match status" value="1"/>
</dbReference>
<dbReference type="PIRSF" id="PIRSF029271">
    <property type="entry name" value="Pdx1"/>
    <property type="match status" value="1"/>
</dbReference>
<dbReference type="SUPFAM" id="SSF51366">
    <property type="entry name" value="Ribulose-phoshate binding barrel"/>
    <property type="match status" value="1"/>
</dbReference>
<dbReference type="PROSITE" id="PS01235">
    <property type="entry name" value="PDXS_SNZ_1"/>
    <property type="match status" value="1"/>
</dbReference>
<dbReference type="PROSITE" id="PS51129">
    <property type="entry name" value="PDXS_SNZ_2"/>
    <property type="match status" value="1"/>
</dbReference>
<reference key="1">
    <citation type="journal article" date="2012" name="Structure">
        <title>Assembly of the eukaryotic PLP-synthase complex from Plasmodium and activation of the Pdx1 enzyme.</title>
        <authorList>
            <person name="Guedez G."/>
            <person name="Hipp K."/>
            <person name="Windeisen V."/>
            <person name="Derrer B."/>
            <person name="Gengenbacher M."/>
            <person name="Bottcher B."/>
            <person name="Sinning I."/>
            <person name="Kappes B."/>
            <person name="Tews I."/>
        </authorList>
    </citation>
    <scope>X-RAY CRYSTALLOGRAPHY (2.42 ANGSTROMS) OF APOENZYME AND IN COMPLEXES WITH D-RIBOSE 5-PHOSPHATE OR SUBUNIT PDX1 FROM P.FALCIPARUM</scope>
    <scope>FUNCTION</scope>
    <scope>CATALYTIC ACTIVITY</scope>
    <scope>SUBUNIT</scope>
    <scope>ACTIVE SITE</scope>
    <scope>MUTAGENESIS OF MET-19; MET-46; LEU-82; MET-103 AND MET-148</scope>
    <source>
        <strain>NK65</strain>
    </source>
</reference>